<organism>
    <name type="scientific">Mytilus edulis</name>
    <name type="common">Blue mussel</name>
    <dbReference type="NCBI Taxonomy" id="6550"/>
    <lineage>
        <taxon>Eukaryota</taxon>
        <taxon>Metazoa</taxon>
        <taxon>Spiralia</taxon>
        <taxon>Lophotrochozoa</taxon>
        <taxon>Mollusca</taxon>
        <taxon>Bivalvia</taxon>
        <taxon>Autobranchia</taxon>
        <taxon>Pteriomorphia</taxon>
        <taxon>Mytilida</taxon>
        <taxon>Mytiloidea</taxon>
        <taxon>Mytilidae</taxon>
        <taxon>Mytilinae</taxon>
        <taxon>Mytilus</taxon>
    </lineage>
</organism>
<protein>
    <recommendedName>
        <fullName>Phosphoenolpyruvate phosphomutase</fullName>
        <shortName>PEP mutase</shortName>
        <shortName>PEP phosphomutase</shortName>
        <shortName>Phosphoenolpyruvate mutase</shortName>
        <ecNumber>5.4.2.9</ecNumber>
    </recommendedName>
</protein>
<accession>P56839</accession>
<reference key="1">
    <citation type="journal article" date="1999" name="Biochemistry">
        <title>Insight into the mechanism of phosphoenolpyruvate mutase catalysis derived from site-directed mutagenesis studies of active site residues.</title>
        <authorList>
            <person name="Jia Y."/>
            <person name="Lu Z."/>
            <person name="Huang K."/>
            <person name="Herzberg O."/>
            <person name="Dunaway-Mariano D."/>
        </authorList>
    </citation>
    <scope>PROTEIN SEQUENCE OF 2-16 AND 115-129</scope>
    <scope>MUTAGENESIS OF ASP-58; ASP-85; ASP-87; GLU-114 AND ARG-159</scope>
    <scope>HOMOTETRAMERIZATION</scope>
</reference>
<reference key="2">
    <citation type="journal article" date="1999" name="Structure">
        <title>Helix swapping between two alpha/beta barrels: crystal structure of phosphoenolpyruvate mutase with bound Mg(2+)-oxalate.</title>
        <authorList>
            <person name="Huang K."/>
            <person name="Li Z."/>
            <person name="Jia Y."/>
            <person name="Dunaway-Mariano D."/>
            <person name="Herzberg O."/>
        </authorList>
    </citation>
    <scope>X-RAY CRYSTALLOGRAPHY (1.8 ANGSTROMS) IN COMPLEX WITH MG(2+) AND AN OXALATE INHIBITOR</scope>
    <scope>HOMOTETRAMERIZATION</scope>
</reference>
<reference key="3">
    <citation type="journal article" date="2002" name="Biochemistry">
        <title>Dissociative phosphoryl transfer in PEP mutase catalysis: structure of the enzyme/sulfopyruvate complex and kinetic properties of mutants.</title>
        <authorList>
            <person name="Liu S."/>
            <person name="Lu Z."/>
            <person name="Jia Y."/>
            <person name="Dunaway-Mariano D."/>
            <person name="Herzberg O."/>
        </authorList>
    </citation>
    <scope>X-RAY CRYSTALLOGRAPHY (2.25 ANGSTROMS) OF 6-295 IN COMPLEX WITH SULFOPYRUVATE</scope>
    <scope>MUTAGENESIS OF ASP-58; ASN-122 AND HIS-190</scope>
</reference>
<proteinExistence type="evidence at protein level"/>
<keyword id="KW-0002">3D-structure</keyword>
<keyword id="KW-0903">Direct protein sequencing</keyword>
<keyword id="KW-0413">Isomerase</keyword>
<keyword id="KW-0460">Magnesium</keyword>
<keyword id="KW-0479">Metal-binding</keyword>
<feature type="initiator methionine" description="Removed" evidence="3">
    <location>
        <position position="1"/>
    </location>
</feature>
<feature type="chain" id="PRO_0000068824" description="Phosphoenolpyruvate phosphomutase">
    <location>
        <begin position="2"/>
        <end position="295"/>
    </location>
</feature>
<feature type="active site" description="Nucleophile" evidence="1">
    <location>
        <position position="58"/>
    </location>
</feature>
<feature type="binding site">
    <location>
        <position position="58"/>
    </location>
    <ligand>
        <name>Mg(2+)</name>
        <dbReference type="ChEBI" id="CHEBI:18420"/>
    </ligand>
</feature>
<feature type="mutagenesis site" description="Abolishes enzyme activity." evidence="3 4">
    <original>D</original>
    <variation>A</variation>
    <variation>S</variation>
    <location>
        <position position="58"/>
    </location>
</feature>
<feature type="mutagenesis site" description="Strongly reduces enzyme activity." evidence="3 4">
    <original>D</original>
    <variation>N</variation>
    <location>
        <position position="58"/>
    </location>
</feature>
<feature type="mutagenesis site" description="Strongly reduces enzyme activity and increases KM." evidence="3">
    <original>D</original>
    <variation>A</variation>
    <location>
        <position position="85"/>
    </location>
</feature>
<feature type="mutagenesis site" description="Strongly reduces enzyme activity." evidence="3">
    <original>D</original>
    <variation>A</variation>
    <location>
        <position position="87"/>
    </location>
</feature>
<feature type="mutagenesis site" description="Strongly reduces enzyme activity." evidence="3">
    <original>E</original>
    <variation>A</variation>
    <location>
        <position position="114"/>
    </location>
</feature>
<feature type="mutagenesis site" description="Strongly reduces enzyme activity." evidence="4">
    <original>N</original>
    <variation>A</variation>
    <variation>D</variation>
    <location>
        <position position="122"/>
    </location>
</feature>
<feature type="mutagenesis site" description="Strongly reduces enzyme activity." evidence="3">
    <original>R</original>
    <variation>A</variation>
    <location>
        <position position="159"/>
    </location>
</feature>
<feature type="mutagenesis site" description="Strongly reduces enzyme activity." evidence="4">
    <original>H</original>
    <variation>A</variation>
    <location>
        <position position="190"/>
    </location>
</feature>
<feature type="helix" evidence="8">
    <location>
        <begin position="7"/>
        <end position="16"/>
    </location>
</feature>
<feature type="strand" evidence="8">
    <location>
        <begin position="17"/>
        <end position="19"/>
    </location>
</feature>
<feature type="strand" evidence="8">
    <location>
        <begin position="21"/>
        <end position="26"/>
    </location>
</feature>
<feature type="helix" evidence="8">
    <location>
        <begin position="29"/>
        <end position="38"/>
    </location>
</feature>
<feature type="strand" evidence="8">
    <location>
        <begin position="43"/>
        <end position="45"/>
    </location>
</feature>
<feature type="helix" evidence="8">
    <location>
        <begin position="48"/>
        <end position="52"/>
    </location>
</feature>
<feature type="turn" evidence="6">
    <location>
        <begin position="58"/>
        <end position="60"/>
    </location>
</feature>
<feature type="helix" evidence="8">
    <location>
        <begin position="65"/>
        <end position="76"/>
    </location>
</feature>
<feature type="strand" evidence="8">
    <location>
        <begin position="82"/>
        <end position="85"/>
    </location>
</feature>
<feature type="strand" evidence="6">
    <location>
        <begin position="90"/>
        <end position="92"/>
    </location>
</feature>
<feature type="helix" evidence="8">
    <location>
        <begin position="93"/>
        <end position="105"/>
    </location>
</feature>
<feature type="strand" evidence="8">
    <location>
        <begin position="110"/>
        <end position="114"/>
    </location>
</feature>
<feature type="strand" evidence="6">
    <location>
        <begin position="126"/>
        <end position="128"/>
    </location>
</feature>
<feature type="helix" evidence="8">
    <location>
        <begin position="135"/>
        <end position="148"/>
    </location>
</feature>
<feature type="strand" evidence="8">
    <location>
        <begin position="155"/>
        <end position="160"/>
    </location>
</feature>
<feature type="turn" evidence="8">
    <location>
        <begin position="162"/>
        <end position="166"/>
    </location>
</feature>
<feature type="helix" evidence="8">
    <location>
        <begin position="169"/>
        <end position="181"/>
    </location>
</feature>
<feature type="strand" evidence="8">
    <location>
        <begin position="185"/>
        <end position="189"/>
    </location>
</feature>
<feature type="strand" evidence="8">
    <location>
        <begin position="193"/>
        <end position="196"/>
    </location>
</feature>
<feature type="helix" evidence="8">
    <location>
        <begin position="197"/>
        <end position="206"/>
    </location>
</feature>
<feature type="strand" evidence="7">
    <location>
        <begin position="208"/>
        <end position="210"/>
    </location>
</feature>
<feature type="strand" evidence="8">
    <location>
        <begin position="212"/>
        <end position="214"/>
    </location>
</feature>
<feature type="turn" evidence="8">
    <location>
        <begin position="218"/>
        <end position="221"/>
    </location>
</feature>
<feature type="helix" evidence="8">
    <location>
        <begin position="224"/>
        <end position="230"/>
    </location>
</feature>
<feature type="strand" evidence="8">
    <location>
        <begin position="234"/>
        <end position="237"/>
    </location>
</feature>
<feature type="helix" evidence="8">
    <location>
        <begin position="240"/>
        <end position="259"/>
    </location>
</feature>
<feature type="strand" evidence="8">
    <location>
        <begin position="260"/>
        <end position="262"/>
    </location>
</feature>
<feature type="turn" evidence="8">
    <location>
        <begin position="263"/>
        <end position="265"/>
    </location>
</feature>
<feature type="helix" evidence="8">
    <location>
        <begin position="266"/>
        <end position="268"/>
    </location>
</feature>
<feature type="helix" evidence="8">
    <location>
        <begin position="272"/>
        <end position="277"/>
    </location>
</feature>
<feature type="helix" evidence="6">
    <location>
        <begin position="281"/>
        <end position="291"/>
    </location>
</feature>
<name>PEPM_MYTED</name>
<sequence length="295" mass="32912">MSTKVKKTTQLKQMLNSKDLEFIMEAHNGLSARIVQEAGFKGIWGSGLSVSAQLGVRDSNEASWTQVVEVLEFMSDASDVPILLDADTGYGNFNNARRLVRKLEDRGVAGACLEDKLFPKTNSLHDGRAQPLADIEEFALKIKACKDSQTDPDFCIVARVEAFIAGWGLDEALKRAEAYRNAGADAILMHSKKADPSDIEAFMKAWNNQGPVVIVPTKYYKTPTDHFRDMGVSMVIWANHNLRASVSAIQQTTKQIYDDQSLVNVEDKIVSVKEIFRLQRDDELVQAEDKYLPKN</sequence>
<comment type="function">
    <text>Formation of a carbon-phosphorus bond by converting phosphoenolpyruvate (PEP) to phosphonopyruvate (P-Pyr).</text>
</comment>
<comment type="catalytic activity">
    <reaction>
        <text>phosphoenolpyruvate + H(+) = 3-phosphonopyruvate</text>
        <dbReference type="Rhea" id="RHEA:17013"/>
        <dbReference type="ChEBI" id="CHEBI:15378"/>
        <dbReference type="ChEBI" id="CHEBI:58702"/>
        <dbReference type="ChEBI" id="CHEBI:71402"/>
        <dbReference type="EC" id="5.4.2.9"/>
    </reaction>
</comment>
<comment type="cofactor">
    <cofactor>
        <name>Mg(2+)</name>
        <dbReference type="ChEBI" id="CHEBI:18420"/>
    </cofactor>
</comment>
<comment type="pathway">
    <text>Phosphorus metabolism; phosphonate biosynthesis.</text>
</comment>
<comment type="subunit">
    <text evidence="2 4">Homotetramer.</text>
</comment>
<comment type="similarity">
    <text evidence="5">Belongs to the isocitrate lyase/PEP mutase superfamily. PEP mutase family.</text>
</comment>
<dbReference type="EC" id="5.4.2.9"/>
<dbReference type="PDB" id="1M1B">
    <property type="method" value="X-ray"/>
    <property type="resolution" value="2.25 A"/>
    <property type="chains" value="A/B=1-295"/>
</dbReference>
<dbReference type="PDB" id="1PYM">
    <property type="method" value="X-ray"/>
    <property type="resolution" value="1.80 A"/>
    <property type="chains" value="A/B=1-295"/>
</dbReference>
<dbReference type="PDB" id="1S2T">
    <property type="method" value="X-ray"/>
    <property type="resolution" value="2.00 A"/>
    <property type="chains" value="A/B=1-295"/>
</dbReference>
<dbReference type="PDB" id="1S2U">
    <property type="method" value="X-ray"/>
    <property type="resolution" value="2.00 A"/>
    <property type="chains" value="A/B=1-295"/>
</dbReference>
<dbReference type="PDB" id="1S2V">
    <property type="method" value="X-ray"/>
    <property type="resolution" value="2.10 A"/>
    <property type="chains" value="A/B/C/D=1-295"/>
</dbReference>
<dbReference type="PDB" id="1S2W">
    <property type="method" value="X-ray"/>
    <property type="resolution" value="1.69 A"/>
    <property type="chains" value="A=1-295"/>
</dbReference>
<dbReference type="PDBsum" id="1M1B"/>
<dbReference type="PDBsum" id="1PYM"/>
<dbReference type="PDBsum" id="1S2T"/>
<dbReference type="PDBsum" id="1S2U"/>
<dbReference type="PDBsum" id="1S2V"/>
<dbReference type="PDBsum" id="1S2W"/>
<dbReference type="SMR" id="P56839"/>
<dbReference type="BioCyc" id="MetaCyc:MONOMER-16744"/>
<dbReference type="BRENDA" id="5.4.2.9">
    <property type="organism ID" value="3544"/>
</dbReference>
<dbReference type="UniPathway" id="UPA00960"/>
<dbReference type="EvolutionaryTrace" id="P56839"/>
<dbReference type="GO" id="GO:0046872">
    <property type="term" value="F:metal ion binding"/>
    <property type="evidence" value="ECO:0007669"/>
    <property type="project" value="UniProtKB-KW"/>
</dbReference>
<dbReference type="GO" id="GO:0050188">
    <property type="term" value="F:phosphoenolpyruvate mutase activity"/>
    <property type="evidence" value="ECO:0007669"/>
    <property type="project" value="UniProtKB-EC"/>
</dbReference>
<dbReference type="GO" id="GO:0032923">
    <property type="term" value="P:organic phosphonate biosynthetic process"/>
    <property type="evidence" value="ECO:0007669"/>
    <property type="project" value="UniProtKB-UniPathway"/>
</dbReference>
<dbReference type="CDD" id="cd00377">
    <property type="entry name" value="ICL_PEPM"/>
    <property type="match status" value="1"/>
</dbReference>
<dbReference type="Gene3D" id="3.20.20.60">
    <property type="entry name" value="Phosphoenolpyruvate-binding domains"/>
    <property type="match status" value="1"/>
</dbReference>
<dbReference type="InterPro" id="IPR039556">
    <property type="entry name" value="ICL/PEPM"/>
</dbReference>
<dbReference type="InterPro" id="IPR012698">
    <property type="entry name" value="PEnolPyrv_PMutase_core"/>
</dbReference>
<dbReference type="InterPro" id="IPR015813">
    <property type="entry name" value="Pyrv/PenolPyrv_kinase-like_dom"/>
</dbReference>
<dbReference type="InterPro" id="IPR040442">
    <property type="entry name" value="Pyrv_kinase-like_dom_sf"/>
</dbReference>
<dbReference type="NCBIfam" id="TIGR02320">
    <property type="entry name" value="PEP_mutase"/>
    <property type="match status" value="1"/>
</dbReference>
<dbReference type="PANTHER" id="PTHR42905">
    <property type="entry name" value="PHOSPHOENOLPYRUVATE CARBOXYLASE"/>
    <property type="match status" value="1"/>
</dbReference>
<dbReference type="PANTHER" id="PTHR42905:SF7">
    <property type="entry name" value="PHOSPHOENOLPYRUVATE PHOSPHOMUTASE"/>
    <property type="match status" value="1"/>
</dbReference>
<dbReference type="Pfam" id="PF13714">
    <property type="entry name" value="PEP_mutase"/>
    <property type="match status" value="1"/>
</dbReference>
<dbReference type="SUPFAM" id="SSF51621">
    <property type="entry name" value="Phosphoenolpyruvate/pyruvate domain"/>
    <property type="match status" value="1"/>
</dbReference>
<evidence type="ECO:0000255" key="1"/>
<evidence type="ECO:0000269" key="2">
    <source>
    </source>
</evidence>
<evidence type="ECO:0000269" key="3">
    <source>
    </source>
</evidence>
<evidence type="ECO:0000269" key="4">
    <source>
    </source>
</evidence>
<evidence type="ECO:0000305" key="5"/>
<evidence type="ECO:0007829" key="6">
    <source>
        <dbReference type="PDB" id="1PYM"/>
    </source>
</evidence>
<evidence type="ECO:0007829" key="7">
    <source>
        <dbReference type="PDB" id="1S2U"/>
    </source>
</evidence>
<evidence type="ECO:0007829" key="8">
    <source>
        <dbReference type="PDB" id="1S2W"/>
    </source>
</evidence>